<comment type="function">
    <text evidence="1">Component of the anaphase promoting complex/cyclosome (APC/C), a cell cycle-regulated E3 ubiquitin-protein ligase complex that controls progression through mitosis and the G1 phase of the cell cycle. The APC/C complex controls several key steps in the cell cycle by mediating ubiquitination and subsequent degradation of target proteins such as cyclins. The APC/C complex is required for the female gametophyte development and is involved in several aspect of development by controlling cell division and cell elongation. Involved in the control of endoreduplication. May recruit the E2 ubiquitin-conjugating enzymes to the complex (By similarity).</text>
</comment>
<comment type="pathway">
    <text evidence="6">Protein modification; protein ubiquitination.</text>
</comment>
<comment type="subunit">
    <text evidence="3">Part of the APC/C complex composed of at least 10 subunits. Interacts with APC2.</text>
</comment>
<comment type="interaction">
    <interactant intactId="EBI-2130744">
        <id>Q9M9L0</id>
    </interactant>
    <interactant intactId="EBI-1749410">
        <id>Q8H1U5</id>
        <label>APC2</label>
    </interactant>
    <organismsDiffer>false</organismsDiffer>
    <experiments>4</experiments>
</comment>
<comment type="subcellular location">
    <subcellularLocation>
        <location evidence="1">Cytoplasm</location>
    </subcellularLocation>
    <subcellularLocation>
        <location evidence="1">Nucleus</location>
    </subcellularLocation>
</comment>
<comment type="similarity">
    <text evidence="6">Belongs to the RING-box family.</text>
</comment>
<comment type="caution">
    <text evidence="4">The sequence shown differs from that proposed in Ref.1 due to the presence of a constitutive single-nucleotide exon.</text>
</comment>
<comment type="sequence caution" evidence="6">
    <conflict type="erroneous gene model prediction">
        <sequence resource="EMBL-CDS" id="AAF26089"/>
    </conflict>
</comment>
<comment type="sequence caution" evidence="6">
    <conflict type="erroneous gene model prediction">
        <sequence resource="EMBL-CDS" id="AEE74309"/>
    </conflict>
</comment>
<comment type="sequence caution" evidence="6">
    <conflict type="erroneous gene model prediction">
        <sequence resource="EMBL-CDS" id="AEE74310"/>
    </conflict>
</comment>
<gene>
    <name evidence="5" type="primary">APC11</name>
    <name evidence="7" type="ordered locus">At3g05870</name>
    <name evidence="8" type="ORF">F10A16.17</name>
</gene>
<proteinExistence type="evidence at protein level"/>
<dbReference type="EMBL" id="AY052402">
    <property type="protein sequence ID" value="AAL13436.1"/>
    <property type="molecule type" value="mRNA"/>
</dbReference>
<dbReference type="EMBL" id="AC012393">
    <property type="protein sequence ID" value="AAF26089.1"/>
    <property type="status" value="ALT_SEQ"/>
    <property type="molecule type" value="Genomic_DNA"/>
</dbReference>
<dbReference type="EMBL" id="CP002686">
    <property type="protein sequence ID" value="AEE74309.1"/>
    <property type="status" value="ALT_SEQ"/>
    <property type="molecule type" value="Genomic_DNA"/>
</dbReference>
<dbReference type="EMBL" id="CP002686">
    <property type="protein sequence ID" value="AEE74310.1"/>
    <property type="status" value="ALT_SEQ"/>
    <property type="molecule type" value="Genomic_DNA"/>
</dbReference>
<dbReference type="EMBL" id="BT030069">
    <property type="protein sequence ID" value="ABN04807.1"/>
    <property type="molecule type" value="mRNA"/>
</dbReference>
<dbReference type="RefSeq" id="NP_001189819.1">
    <property type="nucleotide sequence ID" value="NM_001202890.2"/>
</dbReference>
<dbReference type="RefSeq" id="NP_001325492.1">
    <property type="nucleotide sequence ID" value="NM_001337620.1"/>
</dbReference>
<dbReference type="RefSeq" id="NP_187238.2">
    <property type="nucleotide sequence ID" value="NM_111461.3"/>
</dbReference>
<dbReference type="SMR" id="Q9M9L0"/>
<dbReference type="BioGRID" id="5091">
    <property type="interactions" value="5"/>
</dbReference>
<dbReference type="FunCoup" id="Q9M9L0">
    <property type="interactions" value="1887"/>
</dbReference>
<dbReference type="IntAct" id="Q9M9L0">
    <property type="interactions" value="6"/>
</dbReference>
<dbReference type="STRING" id="3702.Q9M9L0"/>
<dbReference type="PaxDb" id="3702-AT3G05870.1"/>
<dbReference type="ProteomicsDB" id="244451"/>
<dbReference type="DNASU" id="819756"/>
<dbReference type="GeneID" id="819756"/>
<dbReference type="KEGG" id="ath:AT3G05870"/>
<dbReference type="Araport" id="AT3G05870"/>
<dbReference type="TAIR" id="AT3G05870">
    <property type="gene designation" value="APC11"/>
</dbReference>
<dbReference type="eggNOG" id="KOG1493">
    <property type="taxonomic scope" value="Eukaryota"/>
</dbReference>
<dbReference type="HOGENOM" id="CLU_115512_0_1_1"/>
<dbReference type="InParanoid" id="Q9M9L0"/>
<dbReference type="OrthoDB" id="1681166at2759"/>
<dbReference type="UniPathway" id="UPA00143"/>
<dbReference type="PRO" id="PR:Q9M9L0"/>
<dbReference type="Proteomes" id="UP000006548">
    <property type="component" value="Chromosome 3"/>
</dbReference>
<dbReference type="ExpressionAtlas" id="Q9M9L0">
    <property type="expression patterns" value="baseline and differential"/>
</dbReference>
<dbReference type="GO" id="GO:0005680">
    <property type="term" value="C:anaphase-promoting complex"/>
    <property type="evidence" value="ECO:0000318"/>
    <property type="project" value="GO_Central"/>
</dbReference>
<dbReference type="GO" id="GO:0005737">
    <property type="term" value="C:cytoplasm"/>
    <property type="evidence" value="ECO:0007669"/>
    <property type="project" value="UniProtKB-SubCell"/>
</dbReference>
<dbReference type="GO" id="GO:0005634">
    <property type="term" value="C:nucleus"/>
    <property type="evidence" value="ECO:0000318"/>
    <property type="project" value="GO_Central"/>
</dbReference>
<dbReference type="GO" id="GO:0097602">
    <property type="term" value="F:cullin family protein binding"/>
    <property type="evidence" value="ECO:0000318"/>
    <property type="project" value="GO_Central"/>
</dbReference>
<dbReference type="GO" id="GO:0061630">
    <property type="term" value="F:ubiquitin protein ligase activity"/>
    <property type="evidence" value="ECO:0000318"/>
    <property type="project" value="GO_Central"/>
</dbReference>
<dbReference type="GO" id="GO:0008270">
    <property type="term" value="F:zinc ion binding"/>
    <property type="evidence" value="ECO:0007669"/>
    <property type="project" value="UniProtKB-KW"/>
</dbReference>
<dbReference type="GO" id="GO:0031145">
    <property type="term" value="P:anaphase-promoting complex-dependent catabolic process"/>
    <property type="evidence" value="ECO:0007669"/>
    <property type="project" value="InterPro"/>
</dbReference>
<dbReference type="GO" id="GO:0051301">
    <property type="term" value="P:cell division"/>
    <property type="evidence" value="ECO:0007669"/>
    <property type="project" value="UniProtKB-KW"/>
</dbReference>
<dbReference type="GO" id="GO:0045842">
    <property type="term" value="P:positive regulation of mitotic metaphase/anaphase transition"/>
    <property type="evidence" value="ECO:0000318"/>
    <property type="project" value="GO_Central"/>
</dbReference>
<dbReference type="GO" id="GO:0016567">
    <property type="term" value="P:protein ubiquitination"/>
    <property type="evidence" value="ECO:0000318"/>
    <property type="project" value="GO_Central"/>
</dbReference>
<dbReference type="GO" id="GO:0006511">
    <property type="term" value="P:ubiquitin-dependent protein catabolic process"/>
    <property type="evidence" value="ECO:0000318"/>
    <property type="project" value="GO_Central"/>
</dbReference>
<dbReference type="CDD" id="cd16456">
    <property type="entry name" value="RING-H2_APC11"/>
    <property type="match status" value="1"/>
</dbReference>
<dbReference type="FunFam" id="3.30.40.10:FF:000111">
    <property type="entry name" value="Anaphase-promoting complex subunit 11"/>
    <property type="match status" value="1"/>
</dbReference>
<dbReference type="Gene3D" id="3.30.40.10">
    <property type="entry name" value="Zinc/RING finger domain, C3HC4 (zinc finger)"/>
    <property type="match status" value="1"/>
</dbReference>
<dbReference type="InterPro" id="IPR051031">
    <property type="entry name" value="RING-box_E3_Ubiquitin_Ligase"/>
</dbReference>
<dbReference type="InterPro" id="IPR024991">
    <property type="entry name" value="RING-H2_APC11"/>
</dbReference>
<dbReference type="InterPro" id="IPR001841">
    <property type="entry name" value="Znf_RING"/>
</dbReference>
<dbReference type="InterPro" id="IPR013083">
    <property type="entry name" value="Znf_RING/FYVE/PHD"/>
</dbReference>
<dbReference type="PANTHER" id="PTHR11210">
    <property type="entry name" value="RING BOX"/>
    <property type="match status" value="1"/>
</dbReference>
<dbReference type="Pfam" id="PF12861">
    <property type="entry name" value="zf-ANAPC11"/>
    <property type="match status" value="1"/>
</dbReference>
<dbReference type="SUPFAM" id="SSF57850">
    <property type="entry name" value="RING/U-box"/>
    <property type="match status" value="1"/>
</dbReference>
<dbReference type="PROSITE" id="PS50089">
    <property type="entry name" value="ZF_RING_2"/>
    <property type="match status" value="1"/>
</dbReference>
<reference key="1">
    <citation type="submission" date="2001-08" db="EMBL/GenBank/DDBJ databases">
        <title>Arabidopsis thaliana anaphase promoting complex subunit 11 mRNA.</title>
        <authorList>
            <person name="Okresz L."/>
        </authorList>
    </citation>
    <scope>NUCLEOTIDE SEQUENCE [MRNA]</scope>
</reference>
<reference key="2">
    <citation type="journal article" date="2015" name="Sci. Rep.">
        <title>A single-nucleotide exon found in Arabidopsis.</title>
        <authorList>
            <person name="Guo L."/>
            <person name="Liu C.M."/>
        </authorList>
    </citation>
    <scope>NUCLEOTIDE SEQUENCE [GENOMIC DNA / MRNA]</scope>
    <source>
        <strain>cv. Columbia</strain>
        <strain>cv. Landsberg erecta</strain>
    </source>
</reference>
<reference key="3">
    <citation type="journal article" date="2000" name="Nature">
        <title>Sequence and analysis of chromosome 3 of the plant Arabidopsis thaliana.</title>
        <authorList>
            <person name="Salanoubat M."/>
            <person name="Lemcke K."/>
            <person name="Rieger M."/>
            <person name="Ansorge W."/>
            <person name="Unseld M."/>
            <person name="Fartmann B."/>
            <person name="Valle G."/>
            <person name="Bloecker H."/>
            <person name="Perez-Alonso M."/>
            <person name="Obermaier B."/>
            <person name="Delseny M."/>
            <person name="Boutry M."/>
            <person name="Grivell L.A."/>
            <person name="Mache R."/>
            <person name="Puigdomenech P."/>
            <person name="De Simone V."/>
            <person name="Choisne N."/>
            <person name="Artiguenave F."/>
            <person name="Robert C."/>
            <person name="Brottier P."/>
            <person name="Wincker P."/>
            <person name="Cattolico L."/>
            <person name="Weissenbach J."/>
            <person name="Saurin W."/>
            <person name="Quetier F."/>
            <person name="Schaefer M."/>
            <person name="Mueller-Auer S."/>
            <person name="Gabel C."/>
            <person name="Fuchs M."/>
            <person name="Benes V."/>
            <person name="Wurmbach E."/>
            <person name="Drzonek H."/>
            <person name="Erfle H."/>
            <person name="Jordan N."/>
            <person name="Bangert S."/>
            <person name="Wiedelmann R."/>
            <person name="Kranz H."/>
            <person name="Voss H."/>
            <person name="Holland R."/>
            <person name="Brandt P."/>
            <person name="Nyakatura G."/>
            <person name="Vezzi A."/>
            <person name="D'Angelo M."/>
            <person name="Pallavicini A."/>
            <person name="Toppo S."/>
            <person name="Simionati B."/>
            <person name="Conrad A."/>
            <person name="Hornischer K."/>
            <person name="Kauer G."/>
            <person name="Loehnert T.-H."/>
            <person name="Nordsiek G."/>
            <person name="Reichelt J."/>
            <person name="Scharfe M."/>
            <person name="Schoen O."/>
            <person name="Bargues M."/>
            <person name="Terol J."/>
            <person name="Climent J."/>
            <person name="Navarro P."/>
            <person name="Collado C."/>
            <person name="Perez-Perez A."/>
            <person name="Ottenwaelder B."/>
            <person name="Duchemin D."/>
            <person name="Cooke R."/>
            <person name="Laudie M."/>
            <person name="Berger-Llauro C."/>
            <person name="Purnelle B."/>
            <person name="Masuy D."/>
            <person name="de Haan M."/>
            <person name="Maarse A.C."/>
            <person name="Alcaraz J.-P."/>
            <person name="Cottet A."/>
            <person name="Casacuberta E."/>
            <person name="Monfort A."/>
            <person name="Argiriou A."/>
            <person name="Flores M."/>
            <person name="Liguori R."/>
            <person name="Vitale D."/>
            <person name="Mannhaupt G."/>
            <person name="Haase D."/>
            <person name="Schoof H."/>
            <person name="Rudd S."/>
            <person name="Zaccaria P."/>
            <person name="Mewes H.-W."/>
            <person name="Mayer K.F.X."/>
            <person name="Kaul S."/>
            <person name="Town C.D."/>
            <person name="Koo H.L."/>
            <person name="Tallon L.J."/>
            <person name="Jenkins J."/>
            <person name="Rooney T."/>
            <person name="Rizzo M."/>
            <person name="Walts A."/>
            <person name="Utterback T."/>
            <person name="Fujii C.Y."/>
            <person name="Shea T.P."/>
            <person name="Creasy T.H."/>
            <person name="Haas B."/>
            <person name="Maiti R."/>
            <person name="Wu D."/>
            <person name="Peterson J."/>
            <person name="Van Aken S."/>
            <person name="Pai G."/>
            <person name="Militscher J."/>
            <person name="Sellers P."/>
            <person name="Gill J.E."/>
            <person name="Feldblyum T.V."/>
            <person name="Preuss D."/>
            <person name="Lin X."/>
            <person name="Nierman W.C."/>
            <person name="Salzberg S.L."/>
            <person name="White O."/>
            <person name="Venter J.C."/>
            <person name="Fraser C.M."/>
            <person name="Kaneko T."/>
            <person name="Nakamura Y."/>
            <person name="Sato S."/>
            <person name="Kato T."/>
            <person name="Asamizu E."/>
            <person name="Sasamoto S."/>
            <person name="Kimura T."/>
            <person name="Idesawa K."/>
            <person name="Kawashima K."/>
            <person name="Kishida Y."/>
            <person name="Kiyokawa C."/>
            <person name="Kohara M."/>
            <person name="Matsumoto M."/>
            <person name="Matsuno A."/>
            <person name="Muraki A."/>
            <person name="Nakayama S."/>
            <person name="Nakazaki N."/>
            <person name="Shinpo S."/>
            <person name="Takeuchi C."/>
            <person name="Wada T."/>
            <person name="Watanabe A."/>
            <person name="Yamada M."/>
            <person name="Yasuda M."/>
            <person name="Tabata S."/>
        </authorList>
    </citation>
    <scope>NUCLEOTIDE SEQUENCE [LARGE SCALE GENOMIC DNA]</scope>
    <source>
        <strain>cv. Columbia</strain>
    </source>
</reference>
<reference key="4">
    <citation type="journal article" date="2017" name="Plant J.">
        <title>Araport11: a complete reannotation of the Arabidopsis thaliana reference genome.</title>
        <authorList>
            <person name="Cheng C.Y."/>
            <person name="Krishnakumar V."/>
            <person name="Chan A.P."/>
            <person name="Thibaud-Nissen F."/>
            <person name="Schobel S."/>
            <person name="Town C.D."/>
        </authorList>
    </citation>
    <scope>GENOME REANNOTATION</scope>
    <source>
        <strain>cv. Columbia</strain>
    </source>
</reference>
<reference key="5">
    <citation type="submission" date="2007-01" db="EMBL/GenBank/DDBJ databases">
        <title>Arabidopsis ORF clones.</title>
        <authorList>
            <person name="Kim C.J."/>
            <person name="Bautista V.R."/>
            <person name="Chen H."/>
            <person name="De Los Reyes C."/>
            <person name="Wu S.Y."/>
            <person name="Ecker J.R."/>
        </authorList>
    </citation>
    <scope>NUCLEOTIDE SEQUENCE [LARGE SCALE MRNA] OF 28-84</scope>
    <source>
        <strain>cv. Columbia</strain>
    </source>
</reference>
<reference key="6">
    <citation type="journal article" date="2003" name="Plant Cell">
        <title>The Arabidopsis anaphase-promoting complex or cyclosome: molecular and genetic characterization of the APC2 subunit.</title>
        <authorList>
            <person name="Capron A."/>
            <person name="Serralbo O."/>
            <person name="Fulop K."/>
            <person name="Frugier F."/>
            <person name="Parmentier Y."/>
            <person name="Dong A."/>
            <person name="Lecureuil A."/>
            <person name="Guerche P."/>
            <person name="Kondorosi E."/>
            <person name="Scheres B."/>
            <person name="Genschik P."/>
        </authorList>
    </citation>
    <scope>INTERACTION WITH APC2</scope>
</reference>
<protein>
    <recommendedName>
        <fullName evidence="5">Anaphase-promoting complex subunit 11</fullName>
    </recommendedName>
    <alternativeName>
        <fullName evidence="5">Cyclosome subunit 11</fullName>
    </alternativeName>
</protein>
<feature type="chain" id="PRO_0000396847" description="Anaphase-promoting complex subunit 11">
    <location>
        <begin position="1"/>
        <end position="84"/>
    </location>
</feature>
<feature type="zinc finger region" description="RING-type; atypical" evidence="2">
    <location>
        <begin position="34"/>
        <end position="77"/>
    </location>
</feature>
<feature type="sequence conflict" description="In Ref. 1; AAL13436." evidence="6" ref="1">
    <original>Q</original>
    <variation>R</variation>
    <location>
        <position position="7"/>
    </location>
</feature>
<evidence type="ECO:0000250" key="1">
    <source>
        <dbReference type="UniProtKB" id="Q9NYG5"/>
    </source>
</evidence>
<evidence type="ECO:0000255" key="2">
    <source>
        <dbReference type="PROSITE-ProRule" id="PRU00175"/>
    </source>
</evidence>
<evidence type="ECO:0000269" key="3">
    <source>
    </source>
</evidence>
<evidence type="ECO:0000269" key="4">
    <source>
    </source>
</evidence>
<evidence type="ECO:0000303" key="5">
    <source>
    </source>
</evidence>
<evidence type="ECO:0000305" key="6"/>
<evidence type="ECO:0000312" key="7">
    <source>
        <dbReference type="Araport" id="AT3G05870"/>
    </source>
</evidence>
<evidence type="ECO:0000312" key="8">
    <source>
        <dbReference type="EMBL" id="AAF26089.1"/>
    </source>
</evidence>
<organism>
    <name type="scientific">Arabidopsis thaliana</name>
    <name type="common">Mouse-ear cress</name>
    <dbReference type="NCBI Taxonomy" id="3702"/>
    <lineage>
        <taxon>Eukaryota</taxon>
        <taxon>Viridiplantae</taxon>
        <taxon>Streptophyta</taxon>
        <taxon>Embryophyta</taxon>
        <taxon>Tracheophyta</taxon>
        <taxon>Spermatophyta</taxon>
        <taxon>Magnoliopsida</taxon>
        <taxon>eudicotyledons</taxon>
        <taxon>Gunneridae</taxon>
        <taxon>Pentapetalae</taxon>
        <taxon>rosids</taxon>
        <taxon>malvids</taxon>
        <taxon>Brassicales</taxon>
        <taxon>Brassicaceae</taxon>
        <taxon>Camelineae</taxon>
        <taxon>Arabidopsis</taxon>
    </lineage>
</organism>
<keyword id="KW-0131">Cell cycle</keyword>
<keyword id="KW-0132">Cell division</keyword>
<keyword id="KW-0963">Cytoplasm</keyword>
<keyword id="KW-0479">Metal-binding</keyword>
<keyword id="KW-0498">Mitosis</keyword>
<keyword id="KW-0539">Nucleus</keyword>
<keyword id="KW-1185">Reference proteome</keyword>
<keyword id="KW-0833">Ubl conjugation pathway</keyword>
<keyword id="KW-0862">Zinc</keyword>
<keyword id="KW-0863">Zinc-finger</keyword>
<accession>Q9M9L0</accession>
<accession>F4J9K5</accession>
<accession>Q940X6</accession>
<name>APC11_ARATH</name>
<sequence>MKVKILQWHAVASWTWDAQDETCGICRMAFDGCCPDCKLPGDDCPLIWGACNHAFHLHCILKWVNSQTSQAHCPMCRREWQFKE</sequence>